<protein>
    <recommendedName>
        <fullName>Cytochrome P450 2B12</fullName>
        <ecNumber>1.14.14.1</ecNumber>
    </recommendedName>
    <alternativeName>
        <fullName>CYPIIB12</fullName>
    </alternativeName>
</protein>
<keyword id="KW-0256">Endoplasmic reticulum</keyword>
<keyword id="KW-0349">Heme</keyword>
<keyword id="KW-0408">Iron</keyword>
<keyword id="KW-0472">Membrane</keyword>
<keyword id="KW-0479">Metal-binding</keyword>
<keyword id="KW-0492">Microsome</keyword>
<keyword id="KW-0503">Monooxygenase</keyword>
<keyword id="KW-0560">Oxidoreductase</keyword>
<keyword id="KW-0597">Phosphoprotein</keyword>
<keyword id="KW-1185">Reference proteome</keyword>
<gene>
    <name type="primary">Cyp2b12</name>
    <name type="synonym">Cyp2b-12</name>
</gene>
<feature type="chain" id="PRO_0000051687" description="Cytochrome P450 2B12">
    <location>
        <begin position="1"/>
        <end position="492"/>
    </location>
</feature>
<feature type="binding site" description="axial binding residue" evidence="1">
    <location>
        <position position="437"/>
    </location>
    <ligand>
        <name>heme</name>
        <dbReference type="ChEBI" id="CHEBI:30413"/>
    </ligand>
    <ligandPart>
        <name>Fe</name>
        <dbReference type="ChEBI" id="CHEBI:18248"/>
    </ligandPart>
</feature>
<feature type="modified residue" description="Phosphoserine" evidence="2">
    <location>
        <position position="129"/>
    </location>
</feature>
<reference key="1">
    <citation type="journal article" date="1992" name="Biochem. J.">
        <title>Sequence of a novel cytochrome CYP2B cDNA coding for a protein which is expressed in a sebaceous gland, but not in the liver.</title>
        <authorList>
            <person name="Friedberg T."/>
            <person name="Grassow M.A."/>
            <person name="Bartlomowicz-Oesch B."/>
            <person name="Siegert P."/>
            <person name="Arand M."/>
            <person name="Adesnik M."/>
            <person name="Oesch F."/>
        </authorList>
    </citation>
    <scope>NUCLEOTIDE SEQUENCE [MRNA]</scope>
</reference>
<name>CP2BC_RAT</name>
<dbReference type="EC" id="1.14.14.1"/>
<dbReference type="EMBL" id="X63545">
    <property type="protein sequence ID" value="CAA45107.1"/>
    <property type="molecule type" value="mRNA"/>
</dbReference>
<dbReference type="PIR" id="S27160">
    <property type="entry name" value="S27160"/>
</dbReference>
<dbReference type="RefSeq" id="NP_058852.1">
    <property type="nucleotide sequence ID" value="NM_017156.1"/>
</dbReference>
<dbReference type="SMR" id="P33272"/>
<dbReference type="FunCoup" id="P33272">
    <property type="interactions" value="58"/>
</dbReference>
<dbReference type="STRING" id="10116.ENSRNOP00000071570"/>
<dbReference type="PaxDb" id="10116-ENSRNOP00000048784"/>
<dbReference type="GeneID" id="29295"/>
<dbReference type="KEGG" id="rno:29295"/>
<dbReference type="AGR" id="RGD:620088"/>
<dbReference type="CTD" id="29295"/>
<dbReference type="RGD" id="620088">
    <property type="gene designation" value="Cyp2b12"/>
</dbReference>
<dbReference type="eggNOG" id="KOG0156">
    <property type="taxonomic scope" value="Eukaryota"/>
</dbReference>
<dbReference type="InParanoid" id="P33272"/>
<dbReference type="PhylomeDB" id="P33272"/>
<dbReference type="PRO" id="PR:P33272"/>
<dbReference type="Proteomes" id="UP000002494">
    <property type="component" value="Unplaced"/>
</dbReference>
<dbReference type="GO" id="GO:0005737">
    <property type="term" value="C:cytoplasm"/>
    <property type="evidence" value="ECO:0000318"/>
    <property type="project" value="GO_Central"/>
</dbReference>
<dbReference type="GO" id="GO:0005789">
    <property type="term" value="C:endoplasmic reticulum membrane"/>
    <property type="evidence" value="ECO:0007669"/>
    <property type="project" value="UniProtKB-SubCell"/>
</dbReference>
<dbReference type="GO" id="GO:0043231">
    <property type="term" value="C:intracellular membrane-bounded organelle"/>
    <property type="evidence" value="ECO:0000318"/>
    <property type="project" value="GO_Central"/>
</dbReference>
<dbReference type="GO" id="GO:0008392">
    <property type="term" value="F:arachidonate epoxygenase activity"/>
    <property type="evidence" value="ECO:0000314"/>
    <property type="project" value="RGD"/>
</dbReference>
<dbReference type="GO" id="GO:0020037">
    <property type="term" value="F:heme binding"/>
    <property type="evidence" value="ECO:0000318"/>
    <property type="project" value="GO_Central"/>
</dbReference>
<dbReference type="GO" id="GO:0005506">
    <property type="term" value="F:iron ion binding"/>
    <property type="evidence" value="ECO:0007669"/>
    <property type="project" value="InterPro"/>
</dbReference>
<dbReference type="GO" id="GO:0016712">
    <property type="term" value="F:oxidoreductase activity, acting on paired donors, with incorporation or reduction of molecular oxygen, reduced flavin or flavoprotein as one donor, and incorporation of one atom of oxygen"/>
    <property type="evidence" value="ECO:0000318"/>
    <property type="project" value="GO_Central"/>
</dbReference>
<dbReference type="GO" id="GO:0019373">
    <property type="term" value="P:epoxygenase P450 pathway"/>
    <property type="evidence" value="ECO:0000314"/>
    <property type="project" value="RGD"/>
</dbReference>
<dbReference type="GO" id="GO:0006805">
    <property type="term" value="P:xenobiotic metabolic process"/>
    <property type="evidence" value="ECO:0000318"/>
    <property type="project" value="GO_Central"/>
</dbReference>
<dbReference type="CDD" id="cd20672">
    <property type="entry name" value="CYP2B"/>
    <property type="match status" value="1"/>
</dbReference>
<dbReference type="FunFam" id="1.10.630.10:FF:000001">
    <property type="entry name" value="Cytochrome P450, family 2"/>
    <property type="match status" value="1"/>
</dbReference>
<dbReference type="Gene3D" id="1.10.630.10">
    <property type="entry name" value="Cytochrome P450"/>
    <property type="match status" value="1"/>
</dbReference>
<dbReference type="InterPro" id="IPR001128">
    <property type="entry name" value="Cyt_P450"/>
</dbReference>
<dbReference type="InterPro" id="IPR017972">
    <property type="entry name" value="Cyt_P450_CS"/>
</dbReference>
<dbReference type="InterPro" id="IPR002401">
    <property type="entry name" value="Cyt_P450_E_grp-I"/>
</dbReference>
<dbReference type="InterPro" id="IPR008068">
    <property type="entry name" value="Cyt_P450_E_grp-I_CYP2B-like"/>
</dbReference>
<dbReference type="InterPro" id="IPR036396">
    <property type="entry name" value="Cyt_P450_sf"/>
</dbReference>
<dbReference type="InterPro" id="IPR050182">
    <property type="entry name" value="Cytochrome_P450_fam2"/>
</dbReference>
<dbReference type="PANTHER" id="PTHR24300">
    <property type="entry name" value="CYTOCHROME P450 508A4-RELATED"/>
    <property type="match status" value="1"/>
</dbReference>
<dbReference type="PANTHER" id="PTHR24300:SF277">
    <property type="entry name" value="CYTOCHROME P450-RELATED"/>
    <property type="match status" value="1"/>
</dbReference>
<dbReference type="Pfam" id="PF00067">
    <property type="entry name" value="p450"/>
    <property type="match status" value="1"/>
</dbReference>
<dbReference type="PRINTS" id="PR00463">
    <property type="entry name" value="EP450I"/>
</dbReference>
<dbReference type="PRINTS" id="PR01685">
    <property type="entry name" value="EP450ICYP2B"/>
</dbReference>
<dbReference type="PRINTS" id="PR00385">
    <property type="entry name" value="P450"/>
</dbReference>
<dbReference type="SUPFAM" id="SSF48264">
    <property type="entry name" value="Cytochrome P450"/>
    <property type="match status" value="1"/>
</dbReference>
<dbReference type="PROSITE" id="PS00086">
    <property type="entry name" value="CYTOCHROME_P450"/>
    <property type="match status" value="1"/>
</dbReference>
<proteinExistence type="evidence at transcript level"/>
<comment type="function">
    <text>Cytochromes P450 are a group of heme-thiolate monooxygenases. In liver microsomes, this enzyme is involved in an NADPH-dependent electron transport pathway. This isozyme seems responsible for metabolism of 2,2',4,4',5,5'-hexachlorobiphenyl.</text>
</comment>
<comment type="catalytic activity">
    <reaction>
        <text>an organic molecule + reduced [NADPH--hemoprotein reductase] + O2 = an alcohol + oxidized [NADPH--hemoprotein reductase] + H2O + H(+)</text>
        <dbReference type="Rhea" id="RHEA:17149"/>
        <dbReference type="Rhea" id="RHEA-COMP:11964"/>
        <dbReference type="Rhea" id="RHEA-COMP:11965"/>
        <dbReference type="ChEBI" id="CHEBI:15377"/>
        <dbReference type="ChEBI" id="CHEBI:15378"/>
        <dbReference type="ChEBI" id="CHEBI:15379"/>
        <dbReference type="ChEBI" id="CHEBI:30879"/>
        <dbReference type="ChEBI" id="CHEBI:57618"/>
        <dbReference type="ChEBI" id="CHEBI:58210"/>
        <dbReference type="ChEBI" id="CHEBI:142491"/>
        <dbReference type="EC" id="1.14.14.1"/>
    </reaction>
</comment>
<comment type="cofactor">
    <cofactor evidence="1">
        <name>heme</name>
        <dbReference type="ChEBI" id="CHEBI:30413"/>
    </cofactor>
</comment>
<comment type="subcellular location">
    <subcellularLocation>
        <location>Endoplasmic reticulum membrane</location>
        <topology>Peripheral membrane protein</topology>
    </subcellularLocation>
    <subcellularLocation>
        <location>Microsome membrane</location>
        <topology>Peripheral membrane protein</topology>
    </subcellularLocation>
</comment>
<comment type="tissue specificity">
    <text>Preputial gland, but not in liver.</text>
</comment>
<comment type="similarity">
    <text evidence="3">Belongs to the cytochrome P450 family.</text>
</comment>
<evidence type="ECO:0000250" key="1"/>
<evidence type="ECO:0000250" key="2">
    <source>
        <dbReference type="UniProtKB" id="P00176"/>
    </source>
</evidence>
<evidence type="ECO:0000305" key="3"/>
<accession>P33272</accession>
<sequence length="492" mass="55797">MEFGVLLLLTLTVGFLLFLVSQSQPKTHGHLPPGPRPLPFLGNLLQMNRRGFLNSFMQLQEKYGDVFTVHLGPRPVVILCGTDTIREALVDQAEAFSGRGTVAVLHPVVQGYGVIFATGERWKTLRRFSLVTMKEFGMGKRSVDERIKEEAQCLVEELKKYKGAPLNPTFLFQSIAANTICSIVFGERFDYKDHQFLHLLDLVYKTSVLMGSLSSQVFELYSGFLKYFPGAHKQIFKNLQEMLNYIGHIVEKHRATLDPSAPRDFIDTYLLRMEKEKSNHHTEFNHQNLVISVLSLFFAGTETTSTTLRCTFLIMLKYPHVAEKVQKEIDQVIGSHRLPTPDDRTKMPYTDAVIHEIQRFADLTPIGLPHRVTKDTVFRGYLLPKNTEVYPILSSALHDPRYFEQPDTFNPEHFLDANGALKKSEAFLPFSTGKRICLGEGIARNELFIFFTAILQNFTLASPVAPEDIDLTPINIGVGKIPSPYQINFLSR</sequence>
<organism>
    <name type="scientific">Rattus norvegicus</name>
    <name type="common">Rat</name>
    <dbReference type="NCBI Taxonomy" id="10116"/>
    <lineage>
        <taxon>Eukaryota</taxon>
        <taxon>Metazoa</taxon>
        <taxon>Chordata</taxon>
        <taxon>Craniata</taxon>
        <taxon>Vertebrata</taxon>
        <taxon>Euteleostomi</taxon>
        <taxon>Mammalia</taxon>
        <taxon>Eutheria</taxon>
        <taxon>Euarchontoglires</taxon>
        <taxon>Glires</taxon>
        <taxon>Rodentia</taxon>
        <taxon>Myomorpha</taxon>
        <taxon>Muroidea</taxon>
        <taxon>Muridae</taxon>
        <taxon>Murinae</taxon>
        <taxon>Rattus</taxon>
    </lineage>
</organism>